<sequence>MATNTSTLNSTETVLRTENLNVYYGKFLALQNIWLDIPKNKVTAFIGPSGCGKSTLLRCYNRLNDLIESFRAEGKIFYYSKNLYAQDIDPVEVRRRIGMVFQRPNPFPKSIYDNIAFGAKINGYKGNMDELVERSLRKAALWDEVKDKLRQSGASLSGGQQQRLCIARAIAVQPEIILMDEPCSALDPISTLRVEELIHELKEQYTIVIVTHNMQQAARVSDRTAFFNVRPTETGGRIGYLVEYDATESIFNNPKQEDTRDYVSGRFG</sequence>
<gene>
    <name evidence="1" type="primary">pstB3</name>
    <name type="ordered locus">all4572</name>
</gene>
<evidence type="ECO:0000255" key="1">
    <source>
        <dbReference type="HAMAP-Rule" id="MF_01702"/>
    </source>
</evidence>
<keyword id="KW-0067">ATP-binding</keyword>
<keyword id="KW-0997">Cell inner membrane</keyword>
<keyword id="KW-1003">Cell membrane</keyword>
<keyword id="KW-0472">Membrane</keyword>
<keyword id="KW-0547">Nucleotide-binding</keyword>
<keyword id="KW-0592">Phosphate transport</keyword>
<keyword id="KW-1185">Reference proteome</keyword>
<keyword id="KW-1278">Translocase</keyword>
<keyword id="KW-0813">Transport</keyword>
<organism>
    <name type="scientific">Nostoc sp. (strain PCC 7120 / SAG 25.82 / UTEX 2576)</name>
    <dbReference type="NCBI Taxonomy" id="103690"/>
    <lineage>
        <taxon>Bacteria</taxon>
        <taxon>Bacillati</taxon>
        <taxon>Cyanobacteriota</taxon>
        <taxon>Cyanophyceae</taxon>
        <taxon>Nostocales</taxon>
        <taxon>Nostocaceae</taxon>
        <taxon>Nostoc</taxon>
    </lineage>
</organism>
<dbReference type="EC" id="7.3.2.1" evidence="1"/>
<dbReference type="EMBL" id="BA000019">
    <property type="protein sequence ID" value="BAB76271.1"/>
    <property type="molecule type" value="Genomic_DNA"/>
</dbReference>
<dbReference type="PIR" id="AD2377">
    <property type="entry name" value="AD2377"/>
</dbReference>
<dbReference type="SMR" id="Q8YNJ3"/>
<dbReference type="STRING" id="103690.gene:10496622"/>
<dbReference type="KEGG" id="ana:all4572"/>
<dbReference type="eggNOG" id="COG1117">
    <property type="taxonomic scope" value="Bacteria"/>
</dbReference>
<dbReference type="OrthoDB" id="9802185at2"/>
<dbReference type="Proteomes" id="UP000002483">
    <property type="component" value="Chromosome"/>
</dbReference>
<dbReference type="GO" id="GO:0005886">
    <property type="term" value="C:plasma membrane"/>
    <property type="evidence" value="ECO:0007669"/>
    <property type="project" value="UniProtKB-SubCell"/>
</dbReference>
<dbReference type="GO" id="GO:0005524">
    <property type="term" value="F:ATP binding"/>
    <property type="evidence" value="ECO:0007669"/>
    <property type="project" value="UniProtKB-KW"/>
</dbReference>
<dbReference type="GO" id="GO:0016887">
    <property type="term" value="F:ATP hydrolysis activity"/>
    <property type="evidence" value="ECO:0007669"/>
    <property type="project" value="InterPro"/>
</dbReference>
<dbReference type="GO" id="GO:0015415">
    <property type="term" value="F:ATPase-coupled phosphate ion transmembrane transporter activity"/>
    <property type="evidence" value="ECO:0007669"/>
    <property type="project" value="UniProtKB-EC"/>
</dbReference>
<dbReference type="GO" id="GO:0035435">
    <property type="term" value="P:phosphate ion transmembrane transport"/>
    <property type="evidence" value="ECO:0007669"/>
    <property type="project" value="InterPro"/>
</dbReference>
<dbReference type="CDD" id="cd03260">
    <property type="entry name" value="ABC_PstB_phosphate_transporter"/>
    <property type="match status" value="1"/>
</dbReference>
<dbReference type="Gene3D" id="3.40.50.300">
    <property type="entry name" value="P-loop containing nucleotide triphosphate hydrolases"/>
    <property type="match status" value="1"/>
</dbReference>
<dbReference type="InterPro" id="IPR003593">
    <property type="entry name" value="AAA+_ATPase"/>
</dbReference>
<dbReference type="InterPro" id="IPR003439">
    <property type="entry name" value="ABC_transporter-like_ATP-bd"/>
</dbReference>
<dbReference type="InterPro" id="IPR017871">
    <property type="entry name" value="ABC_transporter-like_CS"/>
</dbReference>
<dbReference type="InterPro" id="IPR027417">
    <property type="entry name" value="P-loop_NTPase"/>
</dbReference>
<dbReference type="InterPro" id="IPR005670">
    <property type="entry name" value="PstB-like"/>
</dbReference>
<dbReference type="NCBIfam" id="TIGR00972">
    <property type="entry name" value="3a0107s01c2"/>
    <property type="match status" value="1"/>
</dbReference>
<dbReference type="PANTHER" id="PTHR43423">
    <property type="entry name" value="ABC TRANSPORTER I FAMILY MEMBER 17"/>
    <property type="match status" value="1"/>
</dbReference>
<dbReference type="PANTHER" id="PTHR43423:SF1">
    <property type="entry name" value="ABC TRANSPORTER I FAMILY MEMBER 17"/>
    <property type="match status" value="1"/>
</dbReference>
<dbReference type="Pfam" id="PF00005">
    <property type="entry name" value="ABC_tran"/>
    <property type="match status" value="1"/>
</dbReference>
<dbReference type="SMART" id="SM00382">
    <property type="entry name" value="AAA"/>
    <property type="match status" value="1"/>
</dbReference>
<dbReference type="SUPFAM" id="SSF52540">
    <property type="entry name" value="P-loop containing nucleoside triphosphate hydrolases"/>
    <property type="match status" value="1"/>
</dbReference>
<dbReference type="PROSITE" id="PS00211">
    <property type="entry name" value="ABC_TRANSPORTER_1"/>
    <property type="match status" value="1"/>
</dbReference>
<dbReference type="PROSITE" id="PS50893">
    <property type="entry name" value="ABC_TRANSPORTER_2"/>
    <property type="match status" value="1"/>
</dbReference>
<dbReference type="PROSITE" id="PS51238">
    <property type="entry name" value="PSTB"/>
    <property type="match status" value="1"/>
</dbReference>
<comment type="function">
    <text evidence="1">Part of the ABC transporter complex PstSACB involved in phosphate import. Responsible for energy coupling to the transport system.</text>
</comment>
<comment type="catalytic activity">
    <reaction evidence="1">
        <text>phosphate(out) + ATP + H2O = ADP + 2 phosphate(in) + H(+)</text>
        <dbReference type="Rhea" id="RHEA:24440"/>
        <dbReference type="ChEBI" id="CHEBI:15377"/>
        <dbReference type="ChEBI" id="CHEBI:15378"/>
        <dbReference type="ChEBI" id="CHEBI:30616"/>
        <dbReference type="ChEBI" id="CHEBI:43474"/>
        <dbReference type="ChEBI" id="CHEBI:456216"/>
        <dbReference type="EC" id="7.3.2.1"/>
    </reaction>
</comment>
<comment type="subunit">
    <text evidence="1">The complex is composed of two ATP-binding proteins (PstB), two transmembrane proteins (PstC and PstA) and a solute-binding protein (PstS).</text>
</comment>
<comment type="subcellular location">
    <subcellularLocation>
        <location evidence="1">Cell inner membrane</location>
        <topology evidence="1">Peripheral membrane protein</topology>
    </subcellularLocation>
</comment>
<comment type="similarity">
    <text evidence="1">Belongs to the ABC transporter superfamily. Phosphate importer (TC 3.A.1.7) family.</text>
</comment>
<reference key="1">
    <citation type="journal article" date="2001" name="DNA Res.">
        <title>Complete genomic sequence of the filamentous nitrogen-fixing cyanobacterium Anabaena sp. strain PCC 7120.</title>
        <authorList>
            <person name="Kaneko T."/>
            <person name="Nakamura Y."/>
            <person name="Wolk C.P."/>
            <person name="Kuritz T."/>
            <person name="Sasamoto S."/>
            <person name="Watanabe A."/>
            <person name="Iriguchi M."/>
            <person name="Ishikawa A."/>
            <person name="Kawashima K."/>
            <person name="Kimura T."/>
            <person name="Kishida Y."/>
            <person name="Kohara M."/>
            <person name="Matsumoto M."/>
            <person name="Matsuno A."/>
            <person name="Muraki A."/>
            <person name="Nakazaki N."/>
            <person name="Shimpo S."/>
            <person name="Sugimoto M."/>
            <person name="Takazawa M."/>
            <person name="Yamada M."/>
            <person name="Yasuda M."/>
            <person name="Tabata S."/>
        </authorList>
    </citation>
    <scope>NUCLEOTIDE SEQUENCE [LARGE SCALE GENOMIC DNA]</scope>
    <source>
        <strain>PCC 7120 / SAG 25.82 / UTEX 2576</strain>
    </source>
</reference>
<feature type="chain" id="PRO_0000092769" description="Phosphate import ATP-binding protein PstB 3">
    <location>
        <begin position="1"/>
        <end position="268"/>
    </location>
</feature>
<feature type="domain" description="ABC transporter" evidence="1">
    <location>
        <begin position="15"/>
        <end position="254"/>
    </location>
</feature>
<feature type="binding site" evidence="1">
    <location>
        <begin position="47"/>
        <end position="54"/>
    </location>
    <ligand>
        <name>ATP</name>
        <dbReference type="ChEBI" id="CHEBI:30616"/>
    </ligand>
</feature>
<accession>Q8YNJ3</accession>
<protein>
    <recommendedName>
        <fullName evidence="1">Phosphate import ATP-binding protein PstB 3</fullName>
        <ecNumber evidence="1">7.3.2.1</ecNumber>
    </recommendedName>
    <alternativeName>
        <fullName evidence="1">ABC phosphate transporter 3</fullName>
    </alternativeName>
    <alternativeName>
        <fullName evidence="1">Phosphate-transporting ATPase 3</fullName>
    </alternativeName>
</protein>
<name>PSTB3_NOSS1</name>
<proteinExistence type="inferred from homology"/>